<feature type="chain" id="PRO_0000332478" description="UDP-N-acetylenolpyruvoylglucosamine reductase">
    <location>
        <begin position="1"/>
        <end position="310"/>
    </location>
</feature>
<feature type="domain" description="FAD-binding PCMH-type" evidence="1">
    <location>
        <begin position="35"/>
        <end position="203"/>
    </location>
</feature>
<feature type="active site" evidence="1">
    <location>
        <position position="183"/>
    </location>
</feature>
<feature type="active site" description="Proton donor" evidence="1">
    <location>
        <position position="232"/>
    </location>
</feature>
<feature type="active site" evidence="1">
    <location>
        <position position="302"/>
    </location>
</feature>
<dbReference type="EC" id="1.3.1.98" evidence="1"/>
<dbReference type="EMBL" id="CP000113">
    <property type="protein sequence ID" value="ABF91276.1"/>
    <property type="molecule type" value="Genomic_DNA"/>
</dbReference>
<dbReference type="RefSeq" id="WP_011555556.1">
    <property type="nucleotide sequence ID" value="NC_008095.1"/>
</dbReference>
<dbReference type="SMR" id="Q1D0T2"/>
<dbReference type="STRING" id="246197.MXAN_5602"/>
<dbReference type="EnsemblBacteria" id="ABF91276">
    <property type="protein sequence ID" value="ABF91276"/>
    <property type="gene ID" value="MXAN_5602"/>
</dbReference>
<dbReference type="GeneID" id="41362848"/>
<dbReference type="KEGG" id="mxa:MXAN_5602"/>
<dbReference type="eggNOG" id="COG0812">
    <property type="taxonomic scope" value="Bacteria"/>
</dbReference>
<dbReference type="HOGENOM" id="CLU_035304_1_1_7"/>
<dbReference type="OrthoDB" id="9804753at2"/>
<dbReference type="UniPathway" id="UPA00219"/>
<dbReference type="Proteomes" id="UP000002402">
    <property type="component" value="Chromosome"/>
</dbReference>
<dbReference type="GO" id="GO:0005829">
    <property type="term" value="C:cytosol"/>
    <property type="evidence" value="ECO:0007669"/>
    <property type="project" value="TreeGrafter"/>
</dbReference>
<dbReference type="GO" id="GO:0071949">
    <property type="term" value="F:FAD binding"/>
    <property type="evidence" value="ECO:0007669"/>
    <property type="project" value="InterPro"/>
</dbReference>
<dbReference type="GO" id="GO:0008762">
    <property type="term" value="F:UDP-N-acetylmuramate dehydrogenase activity"/>
    <property type="evidence" value="ECO:0007669"/>
    <property type="project" value="UniProtKB-UniRule"/>
</dbReference>
<dbReference type="GO" id="GO:0051301">
    <property type="term" value="P:cell division"/>
    <property type="evidence" value="ECO:0007669"/>
    <property type="project" value="UniProtKB-KW"/>
</dbReference>
<dbReference type="GO" id="GO:0071555">
    <property type="term" value="P:cell wall organization"/>
    <property type="evidence" value="ECO:0007669"/>
    <property type="project" value="UniProtKB-KW"/>
</dbReference>
<dbReference type="GO" id="GO:0009252">
    <property type="term" value="P:peptidoglycan biosynthetic process"/>
    <property type="evidence" value="ECO:0007669"/>
    <property type="project" value="UniProtKB-UniRule"/>
</dbReference>
<dbReference type="GO" id="GO:0008360">
    <property type="term" value="P:regulation of cell shape"/>
    <property type="evidence" value="ECO:0007669"/>
    <property type="project" value="UniProtKB-KW"/>
</dbReference>
<dbReference type="Gene3D" id="3.30.465.10">
    <property type="match status" value="1"/>
</dbReference>
<dbReference type="Gene3D" id="3.90.78.10">
    <property type="entry name" value="UDP-N-acetylenolpyruvoylglucosamine reductase, C-terminal domain"/>
    <property type="match status" value="1"/>
</dbReference>
<dbReference type="Gene3D" id="3.30.43.10">
    <property type="entry name" value="Uridine Diphospho-n-acetylenolpyruvylglucosamine Reductase, domain 2"/>
    <property type="match status" value="1"/>
</dbReference>
<dbReference type="HAMAP" id="MF_00037">
    <property type="entry name" value="MurB"/>
    <property type="match status" value="1"/>
</dbReference>
<dbReference type="InterPro" id="IPR016166">
    <property type="entry name" value="FAD-bd_PCMH"/>
</dbReference>
<dbReference type="InterPro" id="IPR036318">
    <property type="entry name" value="FAD-bd_PCMH-like_sf"/>
</dbReference>
<dbReference type="InterPro" id="IPR016167">
    <property type="entry name" value="FAD-bd_PCMH_sub1"/>
</dbReference>
<dbReference type="InterPro" id="IPR016169">
    <property type="entry name" value="FAD-bd_PCMH_sub2"/>
</dbReference>
<dbReference type="InterPro" id="IPR003170">
    <property type="entry name" value="MurB"/>
</dbReference>
<dbReference type="InterPro" id="IPR011601">
    <property type="entry name" value="MurB_C"/>
</dbReference>
<dbReference type="InterPro" id="IPR036635">
    <property type="entry name" value="MurB_C_sf"/>
</dbReference>
<dbReference type="InterPro" id="IPR006094">
    <property type="entry name" value="Oxid_FAD_bind_N"/>
</dbReference>
<dbReference type="NCBIfam" id="TIGR00179">
    <property type="entry name" value="murB"/>
    <property type="match status" value="1"/>
</dbReference>
<dbReference type="NCBIfam" id="NF010480">
    <property type="entry name" value="PRK13905.1"/>
    <property type="match status" value="1"/>
</dbReference>
<dbReference type="PANTHER" id="PTHR21071">
    <property type="entry name" value="UDP-N-ACETYLENOLPYRUVOYLGLUCOSAMINE REDUCTASE"/>
    <property type="match status" value="1"/>
</dbReference>
<dbReference type="PANTHER" id="PTHR21071:SF4">
    <property type="entry name" value="UDP-N-ACETYLENOLPYRUVOYLGLUCOSAMINE REDUCTASE"/>
    <property type="match status" value="1"/>
</dbReference>
<dbReference type="Pfam" id="PF01565">
    <property type="entry name" value="FAD_binding_4"/>
    <property type="match status" value="1"/>
</dbReference>
<dbReference type="Pfam" id="PF02873">
    <property type="entry name" value="MurB_C"/>
    <property type="match status" value="1"/>
</dbReference>
<dbReference type="SUPFAM" id="SSF56176">
    <property type="entry name" value="FAD-binding/transporter-associated domain-like"/>
    <property type="match status" value="1"/>
</dbReference>
<dbReference type="SUPFAM" id="SSF56194">
    <property type="entry name" value="Uridine diphospho-N-Acetylenolpyruvylglucosamine reductase, MurB, C-terminal domain"/>
    <property type="match status" value="1"/>
</dbReference>
<dbReference type="PROSITE" id="PS51387">
    <property type="entry name" value="FAD_PCMH"/>
    <property type="match status" value="1"/>
</dbReference>
<protein>
    <recommendedName>
        <fullName evidence="1">UDP-N-acetylenolpyruvoylglucosamine reductase</fullName>
        <ecNumber evidence="1">1.3.1.98</ecNumber>
    </recommendedName>
    <alternativeName>
        <fullName evidence="1">UDP-N-acetylmuramate dehydrogenase</fullName>
    </alternativeName>
</protein>
<comment type="function">
    <text evidence="1">Cell wall formation.</text>
</comment>
<comment type="catalytic activity">
    <reaction evidence="1">
        <text>UDP-N-acetyl-alpha-D-muramate + NADP(+) = UDP-N-acetyl-3-O-(1-carboxyvinyl)-alpha-D-glucosamine + NADPH + H(+)</text>
        <dbReference type="Rhea" id="RHEA:12248"/>
        <dbReference type="ChEBI" id="CHEBI:15378"/>
        <dbReference type="ChEBI" id="CHEBI:57783"/>
        <dbReference type="ChEBI" id="CHEBI:58349"/>
        <dbReference type="ChEBI" id="CHEBI:68483"/>
        <dbReference type="ChEBI" id="CHEBI:70757"/>
        <dbReference type="EC" id="1.3.1.98"/>
    </reaction>
</comment>
<comment type="cofactor">
    <cofactor evidence="1">
        <name>FAD</name>
        <dbReference type="ChEBI" id="CHEBI:57692"/>
    </cofactor>
</comment>
<comment type="pathway">
    <text evidence="1">Cell wall biogenesis; peptidoglycan biosynthesis.</text>
</comment>
<comment type="subcellular location">
    <subcellularLocation>
        <location evidence="1">Cytoplasm</location>
    </subcellularLocation>
</comment>
<comment type="similarity">
    <text evidence="1">Belongs to the MurB family.</text>
</comment>
<accession>Q1D0T2</accession>
<organism>
    <name type="scientific">Myxococcus xanthus (strain DK1622)</name>
    <dbReference type="NCBI Taxonomy" id="246197"/>
    <lineage>
        <taxon>Bacteria</taxon>
        <taxon>Pseudomonadati</taxon>
        <taxon>Myxococcota</taxon>
        <taxon>Myxococcia</taxon>
        <taxon>Myxococcales</taxon>
        <taxon>Cystobacterineae</taxon>
        <taxon>Myxococcaceae</taxon>
        <taxon>Myxococcus</taxon>
    </lineage>
</organism>
<evidence type="ECO:0000255" key="1">
    <source>
        <dbReference type="HAMAP-Rule" id="MF_00037"/>
    </source>
</evidence>
<keyword id="KW-0131">Cell cycle</keyword>
<keyword id="KW-0132">Cell division</keyword>
<keyword id="KW-0133">Cell shape</keyword>
<keyword id="KW-0961">Cell wall biogenesis/degradation</keyword>
<keyword id="KW-0963">Cytoplasm</keyword>
<keyword id="KW-0274">FAD</keyword>
<keyword id="KW-0285">Flavoprotein</keyword>
<keyword id="KW-0521">NADP</keyword>
<keyword id="KW-0560">Oxidoreductase</keyword>
<keyword id="KW-0573">Peptidoglycan synthesis</keyword>
<keyword id="KW-1185">Reference proteome</keyword>
<gene>
    <name evidence="1" type="primary">murB</name>
    <name type="ordered locus">MXAN_5602</name>
</gene>
<reference key="1">
    <citation type="journal article" date="2006" name="Proc. Natl. Acad. Sci. U.S.A.">
        <title>Evolution of sensory complexity recorded in a myxobacterial genome.</title>
        <authorList>
            <person name="Goldman B.S."/>
            <person name="Nierman W.C."/>
            <person name="Kaiser D."/>
            <person name="Slater S.C."/>
            <person name="Durkin A.S."/>
            <person name="Eisen J.A."/>
            <person name="Ronning C.M."/>
            <person name="Barbazuk W.B."/>
            <person name="Blanchard M."/>
            <person name="Field C."/>
            <person name="Halling C."/>
            <person name="Hinkle G."/>
            <person name="Iartchuk O."/>
            <person name="Kim H.S."/>
            <person name="Mackenzie C."/>
            <person name="Madupu R."/>
            <person name="Miller N."/>
            <person name="Shvartsbeyn A."/>
            <person name="Sullivan S.A."/>
            <person name="Vaudin M."/>
            <person name="Wiegand R."/>
            <person name="Kaplan H.B."/>
        </authorList>
    </citation>
    <scope>NUCLEOTIDE SEQUENCE [LARGE SCALE GENOMIC DNA]</scope>
    <source>
        <strain>DK1622</strain>
    </source>
</reference>
<proteinExistence type="inferred from homology"/>
<sequence length="310" mass="31972">MVEAGVKTALAARVESLGGCEVKAGEPLAPLTSVRAGGAAEALVRPRSPDALVALLKLAREEGVPVSILGGGANTLVGDGGVPGLTLKLPGDLFPEVADVGPEEGRLTLGAGAAIVRLINVMRAHALVGAEFLAGIPGTLGGAVSMNAGTKNGEAFRVIEAVEVATADGVGWLTKAQVPYSYRHSELPPGGVVTRVRFALRKGDVVASKAVMDADLGYRKRTQPLSQPNFGSVFTNPPGDHAGRLIELAGLKGYSLGRAQVSTLHANWIVNLGGATARDVLGLVTLMQQRVLEQSGVDMKPEVKRLGDFL</sequence>
<name>MURB_MYXXD</name>